<protein>
    <recommendedName>
        <fullName evidence="1">D-amino acid dehydrogenase</fullName>
        <ecNumber evidence="1">1.4.99.-</ecNumber>
    </recommendedName>
</protein>
<dbReference type="EC" id="1.4.99.-" evidence="1"/>
<dbReference type="EMBL" id="AE004969">
    <property type="protein sequence ID" value="AAW90426.1"/>
    <property type="molecule type" value="Genomic_DNA"/>
</dbReference>
<dbReference type="RefSeq" id="WP_003690316.1">
    <property type="nucleotide sequence ID" value="NC_002946.2"/>
</dbReference>
<dbReference type="RefSeq" id="YP_208838.1">
    <property type="nucleotide sequence ID" value="NC_002946.2"/>
</dbReference>
<dbReference type="SMR" id="Q5F5W1"/>
<dbReference type="STRING" id="242231.NGO_1808"/>
<dbReference type="KEGG" id="ngo:NGO_1808"/>
<dbReference type="PATRIC" id="fig|242231.10.peg.2169"/>
<dbReference type="HOGENOM" id="CLU_007884_9_2_4"/>
<dbReference type="UniPathway" id="UPA00043">
    <property type="reaction ID" value="UER00498"/>
</dbReference>
<dbReference type="Proteomes" id="UP000000535">
    <property type="component" value="Chromosome"/>
</dbReference>
<dbReference type="GO" id="GO:0005737">
    <property type="term" value="C:cytoplasm"/>
    <property type="evidence" value="ECO:0007669"/>
    <property type="project" value="TreeGrafter"/>
</dbReference>
<dbReference type="GO" id="GO:0005886">
    <property type="term" value="C:plasma membrane"/>
    <property type="evidence" value="ECO:0007669"/>
    <property type="project" value="TreeGrafter"/>
</dbReference>
<dbReference type="GO" id="GO:0008718">
    <property type="term" value="F:D-amino-acid dehydrogenase activity"/>
    <property type="evidence" value="ECO:0007669"/>
    <property type="project" value="UniProtKB-UniRule"/>
</dbReference>
<dbReference type="GO" id="GO:0055130">
    <property type="term" value="P:D-alanine catabolic process"/>
    <property type="evidence" value="ECO:0007669"/>
    <property type="project" value="UniProtKB-UniPathway"/>
</dbReference>
<dbReference type="FunFam" id="3.50.50.60:FF:000020">
    <property type="entry name" value="D-amino acid dehydrogenase"/>
    <property type="match status" value="1"/>
</dbReference>
<dbReference type="Gene3D" id="3.30.9.10">
    <property type="entry name" value="D-Amino Acid Oxidase, subunit A, domain 2"/>
    <property type="match status" value="1"/>
</dbReference>
<dbReference type="Gene3D" id="3.50.50.60">
    <property type="entry name" value="FAD/NAD(P)-binding domain"/>
    <property type="match status" value="2"/>
</dbReference>
<dbReference type="HAMAP" id="MF_01202">
    <property type="entry name" value="DadA"/>
    <property type="match status" value="1"/>
</dbReference>
<dbReference type="InterPro" id="IPR023080">
    <property type="entry name" value="DadA"/>
</dbReference>
<dbReference type="InterPro" id="IPR006076">
    <property type="entry name" value="FAD-dep_OxRdtase"/>
</dbReference>
<dbReference type="InterPro" id="IPR036188">
    <property type="entry name" value="FAD/NAD-bd_sf"/>
</dbReference>
<dbReference type="NCBIfam" id="NF001933">
    <property type="entry name" value="PRK00711.1"/>
    <property type="match status" value="1"/>
</dbReference>
<dbReference type="PANTHER" id="PTHR13847:SF280">
    <property type="entry name" value="D-AMINO ACID DEHYDROGENASE"/>
    <property type="match status" value="1"/>
</dbReference>
<dbReference type="PANTHER" id="PTHR13847">
    <property type="entry name" value="SARCOSINE DEHYDROGENASE-RELATED"/>
    <property type="match status" value="1"/>
</dbReference>
<dbReference type="Pfam" id="PF01266">
    <property type="entry name" value="DAO"/>
    <property type="match status" value="1"/>
</dbReference>
<dbReference type="SUPFAM" id="SSF54373">
    <property type="entry name" value="FAD-linked reductases, C-terminal domain"/>
    <property type="match status" value="1"/>
</dbReference>
<dbReference type="SUPFAM" id="SSF51905">
    <property type="entry name" value="FAD/NAD(P)-binding domain"/>
    <property type="match status" value="1"/>
</dbReference>
<keyword id="KW-0274">FAD</keyword>
<keyword id="KW-0285">Flavoprotein</keyword>
<keyword id="KW-0560">Oxidoreductase</keyword>
<keyword id="KW-1185">Reference proteome</keyword>
<reference key="1">
    <citation type="submission" date="2003-03" db="EMBL/GenBank/DDBJ databases">
        <title>The complete genome sequence of Neisseria gonorrhoeae.</title>
        <authorList>
            <person name="Lewis L.A."/>
            <person name="Gillaspy A.F."/>
            <person name="McLaughlin R.E."/>
            <person name="Gipson M."/>
            <person name="Ducey T.F."/>
            <person name="Ownbey T."/>
            <person name="Hartman K."/>
            <person name="Nydick C."/>
            <person name="Carson M.B."/>
            <person name="Vaughn J."/>
            <person name="Thomson C."/>
            <person name="Song L."/>
            <person name="Lin S."/>
            <person name="Yuan X."/>
            <person name="Najar F."/>
            <person name="Zhan M."/>
            <person name="Ren Q."/>
            <person name="Zhu H."/>
            <person name="Qi S."/>
            <person name="Kenton S.M."/>
            <person name="Lai H."/>
            <person name="White J.D."/>
            <person name="Clifton S."/>
            <person name="Roe B.A."/>
            <person name="Dyer D.W."/>
        </authorList>
    </citation>
    <scope>NUCLEOTIDE SEQUENCE [LARGE SCALE GENOMIC DNA]</scope>
    <source>
        <strain>ATCC 700825 / FA 1090</strain>
    </source>
</reference>
<comment type="function">
    <text evidence="1">Oxidative deamination of D-amino acids.</text>
</comment>
<comment type="catalytic activity">
    <reaction evidence="1">
        <text>a D-alpha-amino acid + A + H2O = a 2-oxocarboxylate + AH2 + NH4(+)</text>
        <dbReference type="Rhea" id="RHEA:18125"/>
        <dbReference type="ChEBI" id="CHEBI:13193"/>
        <dbReference type="ChEBI" id="CHEBI:15377"/>
        <dbReference type="ChEBI" id="CHEBI:17499"/>
        <dbReference type="ChEBI" id="CHEBI:28938"/>
        <dbReference type="ChEBI" id="CHEBI:35179"/>
        <dbReference type="ChEBI" id="CHEBI:59871"/>
    </reaction>
</comment>
<comment type="cofactor">
    <cofactor evidence="1">
        <name>FAD</name>
        <dbReference type="ChEBI" id="CHEBI:57692"/>
    </cofactor>
</comment>
<comment type="pathway">
    <text>Amino-acid degradation; D-alanine degradation; NH(3) and pyruvate from D-alanine: step 1/1.</text>
</comment>
<comment type="similarity">
    <text evidence="1">Belongs to the DadA oxidoreductase family.</text>
</comment>
<proteinExistence type="inferred from homology"/>
<sequence length="419" mass="46845">MKVLVLGAGVAGVSSVWYLAEAGHEVTVIDRTEGVAMETSFANAGQLSYGYTTPWAAPGIPTKALKRLFKSHPPLLFRPDGGLYQIEWLWRMLQNCTATRYQINKERMVRISEYSREMFRRFEAQTDMNFEGRKKGTLQIFRQTEEVEAAKQDIAVLERYGVPYRRLKPEECAEFEPALARVTAKIVGGLHLPADATGDCRLFTENLYKLCQEKGVRFYFNQTISRIDHNGLRIKAVETETGRFETDAVVCALGCFSRTVLAQLDLNLPIYPVKGYSLTLPVTNSDGAPVSTVLDESYKVAITRFDNRIRVGGMAELSGYETKLPEKRRETLALVVNDLFPEGGDLSQALSWSGLRPMTPDSTPLIGRTRFENLFLNTGHGTLGWTMSPGSAKLTADIVSGKDTEIRSDDLSLSRYQKL</sequence>
<organism>
    <name type="scientific">Neisseria gonorrhoeae (strain ATCC 700825 / FA 1090)</name>
    <dbReference type="NCBI Taxonomy" id="242231"/>
    <lineage>
        <taxon>Bacteria</taxon>
        <taxon>Pseudomonadati</taxon>
        <taxon>Pseudomonadota</taxon>
        <taxon>Betaproteobacteria</taxon>
        <taxon>Neisseriales</taxon>
        <taxon>Neisseriaceae</taxon>
        <taxon>Neisseria</taxon>
    </lineage>
</organism>
<feature type="chain" id="PRO_1000066100" description="D-amino acid dehydrogenase">
    <location>
        <begin position="1"/>
        <end position="419"/>
    </location>
</feature>
<feature type="binding site" evidence="1">
    <location>
        <begin position="3"/>
        <end position="17"/>
    </location>
    <ligand>
        <name>FAD</name>
        <dbReference type="ChEBI" id="CHEBI:57692"/>
    </ligand>
</feature>
<accession>Q5F5W1</accession>
<gene>
    <name evidence="1" type="primary">dadA</name>
    <name type="ordered locus">NGO_1808</name>
</gene>
<evidence type="ECO:0000255" key="1">
    <source>
        <dbReference type="HAMAP-Rule" id="MF_01202"/>
    </source>
</evidence>
<name>DADA_NEIG1</name>